<organism>
    <name type="scientific">Streptococcus pneumoniae (strain 70585)</name>
    <dbReference type="NCBI Taxonomy" id="488221"/>
    <lineage>
        <taxon>Bacteria</taxon>
        <taxon>Bacillati</taxon>
        <taxon>Bacillota</taxon>
        <taxon>Bacilli</taxon>
        <taxon>Lactobacillales</taxon>
        <taxon>Streptococcaceae</taxon>
        <taxon>Streptococcus</taxon>
    </lineage>
</organism>
<name>Y1174_STRP7</name>
<sequence>MMNMQNMMRQAQKLQKQMEQSQAELAAMQFVGKSAQDLVQATLTGDKKVVSIDFNPAVVDPEDLETLSDMTVQAINSALEQIDETTKKKLGAFAGKLPF</sequence>
<protein>
    <recommendedName>
        <fullName evidence="1">Nucleoid-associated protein SP70585_1174</fullName>
    </recommendedName>
</protein>
<dbReference type="EMBL" id="CP000918">
    <property type="protein sequence ID" value="ACO16233.1"/>
    <property type="molecule type" value="Genomic_DNA"/>
</dbReference>
<dbReference type="RefSeq" id="WP_000981526.1">
    <property type="nucleotide sequence ID" value="NC_012468.1"/>
</dbReference>
<dbReference type="SMR" id="C1C797"/>
<dbReference type="KEGG" id="snm:SP70585_1174"/>
<dbReference type="HOGENOM" id="CLU_140930_1_1_9"/>
<dbReference type="Proteomes" id="UP000002211">
    <property type="component" value="Chromosome"/>
</dbReference>
<dbReference type="GO" id="GO:0043590">
    <property type="term" value="C:bacterial nucleoid"/>
    <property type="evidence" value="ECO:0007669"/>
    <property type="project" value="UniProtKB-UniRule"/>
</dbReference>
<dbReference type="GO" id="GO:0005829">
    <property type="term" value="C:cytosol"/>
    <property type="evidence" value="ECO:0007669"/>
    <property type="project" value="TreeGrafter"/>
</dbReference>
<dbReference type="GO" id="GO:0003677">
    <property type="term" value="F:DNA binding"/>
    <property type="evidence" value="ECO:0007669"/>
    <property type="project" value="UniProtKB-UniRule"/>
</dbReference>
<dbReference type="FunFam" id="3.30.1310.10:FF:000005">
    <property type="entry name" value="Nucleoid-associated protein SPAR113_1167"/>
    <property type="match status" value="1"/>
</dbReference>
<dbReference type="Gene3D" id="3.30.1310.10">
    <property type="entry name" value="Nucleoid-associated protein YbaB-like domain"/>
    <property type="match status" value="1"/>
</dbReference>
<dbReference type="HAMAP" id="MF_00274">
    <property type="entry name" value="DNA_YbaB_EbfC"/>
    <property type="match status" value="1"/>
</dbReference>
<dbReference type="InterPro" id="IPR036894">
    <property type="entry name" value="YbaB-like_sf"/>
</dbReference>
<dbReference type="InterPro" id="IPR004401">
    <property type="entry name" value="YbaB/EbfC"/>
</dbReference>
<dbReference type="NCBIfam" id="TIGR00103">
    <property type="entry name" value="DNA_YbaB_EbfC"/>
    <property type="match status" value="1"/>
</dbReference>
<dbReference type="PANTHER" id="PTHR33449">
    <property type="entry name" value="NUCLEOID-ASSOCIATED PROTEIN YBAB"/>
    <property type="match status" value="1"/>
</dbReference>
<dbReference type="PANTHER" id="PTHR33449:SF1">
    <property type="entry name" value="NUCLEOID-ASSOCIATED PROTEIN YBAB"/>
    <property type="match status" value="1"/>
</dbReference>
<dbReference type="Pfam" id="PF02575">
    <property type="entry name" value="YbaB_DNA_bd"/>
    <property type="match status" value="1"/>
</dbReference>
<dbReference type="PIRSF" id="PIRSF004555">
    <property type="entry name" value="UCP004555"/>
    <property type="match status" value="1"/>
</dbReference>
<dbReference type="SUPFAM" id="SSF82607">
    <property type="entry name" value="YbaB-like"/>
    <property type="match status" value="1"/>
</dbReference>
<evidence type="ECO:0000255" key="1">
    <source>
        <dbReference type="HAMAP-Rule" id="MF_00274"/>
    </source>
</evidence>
<proteinExistence type="inferred from homology"/>
<feature type="chain" id="PRO_1000197678" description="Nucleoid-associated protein SP70585_1174">
    <location>
        <begin position="1"/>
        <end position="99"/>
    </location>
</feature>
<reference key="1">
    <citation type="journal article" date="2010" name="Genome Biol.">
        <title>Structure and dynamics of the pan-genome of Streptococcus pneumoniae and closely related species.</title>
        <authorList>
            <person name="Donati C."/>
            <person name="Hiller N.L."/>
            <person name="Tettelin H."/>
            <person name="Muzzi A."/>
            <person name="Croucher N.J."/>
            <person name="Angiuoli S.V."/>
            <person name="Oggioni M."/>
            <person name="Dunning Hotopp J.C."/>
            <person name="Hu F.Z."/>
            <person name="Riley D.R."/>
            <person name="Covacci A."/>
            <person name="Mitchell T.J."/>
            <person name="Bentley S.D."/>
            <person name="Kilian M."/>
            <person name="Ehrlich G.D."/>
            <person name="Rappuoli R."/>
            <person name="Moxon E.R."/>
            <person name="Masignani V."/>
        </authorList>
    </citation>
    <scope>NUCLEOTIDE SEQUENCE [LARGE SCALE GENOMIC DNA]</scope>
    <source>
        <strain>70585</strain>
    </source>
</reference>
<accession>C1C797</accession>
<gene>
    <name type="ordered locus">SP70585_1174</name>
</gene>
<comment type="function">
    <text evidence="1">Binds to DNA and alters its conformation. May be involved in regulation of gene expression, nucleoid organization and DNA protection.</text>
</comment>
<comment type="subunit">
    <text evidence="1">Homodimer.</text>
</comment>
<comment type="subcellular location">
    <subcellularLocation>
        <location evidence="1">Cytoplasm</location>
        <location evidence="1">Nucleoid</location>
    </subcellularLocation>
</comment>
<comment type="similarity">
    <text evidence="1">Belongs to the YbaB/EbfC family.</text>
</comment>
<keyword id="KW-0963">Cytoplasm</keyword>
<keyword id="KW-0238">DNA-binding</keyword>